<proteinExistence type="inferred from homology"/>
<evidence type="ECO:0000255" key="1">
    <source>
        <dbReference type="HAMAP-Rule" id="MF_00549"/>
    </source>
</evidence>
<accession>A4W8X5</accession>
<name>MGSA_ENT38</name>
<gene>
    <name evidence="1" type="primary">mgsA</name>
    <name type="ordered locus">Ent638_1475</name>
</gene>
<sequence>MELTTRTLPERKHIALVAHDHCKKMLLNWVQRHQALLEKHNLSATGTTGNLIHRETGLEVNAMLSGPLGGDQQVGAQISEGKIDVLIFFWDPLNAVPHDPDVKALLRLATVWNIPVATNLSTADFIIESPHFNSSVEILIPDYPRYLAERLK</sequence>
<protein>
    <recommendedName>
        <fullName evidence="1">Methylglyoxal synthase</fullName>
        <shortName evidence="1">MGS</shortName>
        <ecNumber evidence="1">4.2.3.3</ecNumber>
    </recommendedName>
</protein>
<comment type="function">
    <text evidence="1">Catalyzes the formation of methylglyoxal from dihydroxyacetone phosphate.</text>
</comment>
<comment type="catalytic activity">
    <reaction evidence="1">
        <text>dihydroxyacetone phosphate = methylglyoxal + phosphate</text>
        <dbReference type="Rhea" id="RHEA:17937"/>
        <dbReference type="ChEBI" id="CHEBI:17158"/>
        <dbReference type="ChEBI" id="CHEBI:43474"/>
        <dbReference type="ChEBI" id="CHEBI:57642"/>
        <dbReference type="EC" id="4.2.3.3"/>
    </reaction>
</comment>
<comment type="similarity">
    <text evidence="1">Belongs to the methylglyoxal synthase family.</text>
</comment>
<dbReference type="EC" id="4.2.3.3" evidence="1"/>
<dbReference type="EMBL" id="CP000653">
    <property type="protein sequence ID" value="ABP60155.1"/>
    <property type="molecule type" value="Genomic_DNA"/>
</dbReference>
<dbReference type="RefSeq" id="WP_012016872.1">
    <property type="nucleotide sequence ID" value="NC_009436.1"/>
</dbReference>
<dbReference type="SMR" id="A4W8X5"/>
<dbReference type="STRING" id="399742.Ent638_1475"/>
<dbReference type="KEGG" id="ent:Ent638_1475"/>
<dbReference type="eggNOG" id="COG1803">
    <property type="taxonomic scope" value="Bacteria"/>
</dbReference>
<dbReference type="HOGENOM" id="CLU_120420_0_1_6"/>
<dbReference type="OrthoDB" id="9787147at2"/>
<dbReference type="Proteomes" id="UP000000230">
    <property type="component" value="Chromosome"/>
</dbReference>
<dbReference type="GO" id="GO:0005829">
    <property type="term" value="C:cytosol"/>
    <property type="evidence" value="ECO:0007669"/>
    <property type="project" value="TreeGrafter"/>
</dbReference>
<dbReference type="GO" id="GO:0008929">
    <property type="term" value="F:methylglyoxal synthase activity"/>
    <property type="evidence" value="ECO:0007669"/>
    <property type="project" value="UniProtKB-UniRule"/>
</dbReference>
<dbReference type="GO" id="GO:0019242">
    <property type="term" value="P:methylglyoxal biosynthetic process"/>
    <property type="evidence" value="ECO:0007669"/>
    <property type="project" value="UniProtKB-UniRule"/>
</dbReference>
<dbReference type="CDD" id="cd01422">
    <property type="entry name" value="MGS"/>
    <property type="match status" value="1"/>
</dbReference>
<dbReference type="FunFam" id="3.40.50.1380:FF:000002">
    <property type="entry name" value="Methylglyoxal synthase"/>
    <property type="match status" value="1"/>
</dbReference>
<dbReference type="Gene3D" id="3.40.50.1380">
    <property type="entry name" value="Methylglyoxal synthase-like domain"/>
    <property type="match status" value="1"/>
</dbReference>
<dbReference type="HAMAP" id="MF_00549">
    <property type="entry name" value="Methylglyoxal_synth"/>
    <property type="match status" value="1"/>
</dbReference>
<dbReference type="InterPro" id="IPR004363">
    <property type="entry name" value="Methylgl_synth"/>
</dbReference>
<dbReference type="InterPro" id="IPR018148">
    <property type="entry name" value="Methylglyoxal_synth_AS"/>
</dbReference>
<dbReference type="InterPro" id="IPR011607">
    <property type="entry name" value="MGS-like_dom"/>
</dbReference>
<dbReference type="InterPro" id="IPR036914">
    <property type="entry name" value="MGS-like_dom_sf"/>
</dbReference>
<dbReference type="NCBIfam" id="TIGR00160">
    <property type="entry name" value="MGSA"/>
    <property type="match status" value="1"/>
</dbReference>
<dbReference type="NCBIfam" id="NF003559">
    <property type="entry name" value="PRK05234.1"/>
    <property type="match status" value="1"/>
</dbReference>
<dbReference type="PANTHER" id="PTHR30492">
    <property type="entry name" value="METHYLGLYOXAL SYNTHASE"/>
    <property type="match status" value="1"/>
</dbReference>
<dbReference type="PANTHER" id="PTHR30492:SF0">
    <property type="entry name" value="METHYLGLYOXAL SYNTHASE"/>
    <property type="match status" value="1"/>
</dbReference>
<dbReference type="Pfam" id="PF02142">
    <property type="entry name" value="MGS"/>
    <property type="match status" value="1"/>
</dbReference>
<dbReference type="PIRSF" id="PIRSF006614">
    <property type="entry name" value="Methylglyox_syn"/>
    <property type="match status" value="1"/>
</dbReference>
<dbReference type="SMART" id="SM00851">
    <property type="entry name" value="MGS"/>
    <property type="match status" value="1"/>
</dbReference>
<dbReference type="SUPFAM" id="SSF52335">
    <property type="entry name" value="Methylglyoxal synthase-like"/>
    <property type="match status" value="1"/>
</dbReference>
<dbReference type="PROSITE" id="PS01335">
    <property type="entry name" value="METHYLGLYOXAL_SYNTH"/>
    <property type="match status" value="1"/>
</dbReference>
<dbReference type="PROSITE" id="PS51855">
    <property type="entry name" value="MGS"/>
    <property type="match status" value="1"/>
</dbReference>
<organism>
    <name type="scientific">Enterobacter sp. (strain 638)</name>
    <dbReference type="NCBI Taxonomy" id="399742"/>
    <lineage>
        <taxon>Bacteria</taxon>
        <taxon>Pseudomonadati</taxon>
        <taxon>Pseudomonadota</taxon>
        <taxon>Gammaproteobacteria</taxon>
        <taxon>Enterobacterales</taxon>
        <taxon>Enterobacteriaceae</taxon>
        <taxon>Enterobacter</taxon>
    </lineage>
</organism>
<keyword id="KW-0456">Lyase</keyword>
<feature type="chain" id="PRO_1000061089" description="Methylglyoxal synthase">
    <location>
        <begin position="1"/>
        <end position="152"/>
    </location>
</feature>
<feature type="domain" description="MGS-like" evidence="1">
    <location>
        <begin position="6"/>
        <end position="152"/>
    </location>
</feature>
<feature type="active site" description="Proton donor/acceptor" evidence="1">
    <location>
        <position position="71"/>
    </location>
</feature>
<feature type="binding site" evidence="1">
    <location>
        <position position="19"/>
    </location>
    <ligand>
        <name>substrate</name>
    </ligand>
</feature>
<feature type="binding site" evidence="1">
    <location>
        <position position="23"/>
    </location>
    <ligand>
        <name>substrate</name>
    </ligand>
</feature>
<feature type="binding site" evidence="1">
    <location>
        <begin position="45"/>
        <end position="48"/>
    </location>
    <ligand>
        <name>substrate</name>
    </ligand>
</feature>
<feature type="binding site" evidence="1">
    <location>
        <begin position="65"/>
        <end position="66"/>
    </location>
    <ligand>
        <name>substrate</name>
    </ligand>
</feature>
<feature type="binding site" evidence="1">
    <location>
        <position position="98"/>
    </location>
    <ligand>
        <name>substrate</name>
    </ligand>
</feature>
<reference key="1">
    <citation type="journal article" date="2010" name="PLoS Genet.">
        <title>Genome sequence of the plant growth promoting endophytic bacterium Enterobacter sp. 638.</title>
        <authorList>
            <person name="Taghavi S."/>
            <person name="van der Lelie D."/>
            <person name="Hoffman A."/>
            <person name="Zhang Y.B."/>
            <person name="Walla M.D."/>
            <person name="Vangronsveld J."/>
            <person name="Newman L."/>
            <person name="Monchy S."/>
        </authorList>
    </citation>
    <scope>NUCLEOTIDE SEQUENCE [LARGE SCALE GENOMIC DNA]</scope>
    <source>
        <strain>638</strain>
    </source>
</reference>